<sequence>MDIYKFAISPLLFNVVKTDPEWLHQQTIRSFSWLSQTPTSWANQRLQKSLSLYDSHLEQKLFGLNFPNPVGLAAGFDKDGVAAGIWSNLGFGFAELGTVTFHAQPGNPRPRLFRLPLDKAALNRMGFNNLGAAAMATRLVQEKQESTNLIPIGINLGKSKVTPLEEAAQDYLDSFRLLKDLGDYFVVNVSSPNTPGLRSLQDASMLSAILNLLQQENTTHKPIFVKIAPDLDWVAIAEIISLAKTYNLAGIIATNTTIRRDGLKTQVINQTGKSPQEEAGGISGEPLRDRSTEVIRFIWQQTQGEIPIIGVGGIFSPEDAWEKITAGASLIQVYTGWIYEGPLMVRRILEGLLSKLEQNGFNSIREAVGLEIKSKK</sequence>
<comment type="function">
    <text evidence="1">Catalyzes the conversion of dihydroorotate to orotate with quinone as electron acceptor.</text>
</comment>
<comment type="catalytic activity">
    <reaction evidence="1">
        <text>(S)-dihydroorotate + a quinone = orotate + a quinol</text>
        <dbReference type="Rhea" id="RHEA:30187"/>
        <dbReference type="ChEBI" id="CHEBI:24646"/>
        <dbReference type="ChEBI" id="CHEBI:30839"/>
        <dbReference type="ChEBI" id="CHEBI:30864"/>
        <dbReference type="ChEBI" id="CHEBI:132124"/>
        <dbReference type="EC" id="1.3.5.2"/>
    </reaction>
</comment>
<comment type="cofactor">
    <cofactor evidence="1">
        <name>FMN</name>
        <dbReference type="ChEBI" id="CHEBI:58210"/>
    </cofactor>
    <text evidence="1">Binds 1 FMN per subunit.</text>
</comment>
<comment type="pathway">
    <text evidence="1">Pyrimidine metabolism; UMP biosynthesis via de novo pathway; orotate from (S)-dihydroorotate (quinone route): step 1/1.</text>
</comment>
<comment type="subunit">
    <text evidence="1">Monomer.</text>
</comment>
<comment type="subcellular location">
    <subcellularLocation>
        <location evidence="1">Cell membrane</location>
        <topology evidence="1">Peripheral membrane protein</topology>
    </subcellularLocation>
</comment>
<comment type="similarity">
    <text evidence="1">Belongs to the dihydroorotate dehydrogenase family. Type 2 subfamily.</text>
</comment>
<accession>B2IU79</accession>
<keyword id="KW-1003">Cell membrane</keyword>
<keyword id="KW-0285">Flavoprotein</keyword>
<keyword id="KW-0288">FMN</keyword>
<keyword id="KW-0472">Membrane</keyword>
<keyword id="KW-0560">Oxidoreductase</keyword>
<keyword id="KW-0665">Pyrimidine biosynthesis</keyword>
<keyword id="KW-1185">Reference proteome</keyword>
<organism>
    <name type="scientific">Nostoc punctiforme (strain ATCC 29133 / PCC 73102)</name>
    <dbReference type="NCBI Taxonomy" id="63737"/>
    <lineage>
        <taxon>Bacteria</taxon>
        <taxon>Bacillati</taxon>
        <taxon>Cyanobacteriota</taxon>
        <taxon>Cyanophyceae</taxon>
        <taxon>Nostocales</taxon>
        <taxon>Nostocaceae</taxon>
        <taxon>Nostoc</taxon>
    </lineage>
</organism>
<protein>
    <recommendedName>
        <fullName evidence="1">Dihydroorotate dehydrogenase (quinone)</fullName>
        <ecNumber evidence="1">1.3.5.2</ecNumber>
    </recommendedName>
    <alternativeName>
        <fullName evidence="1">DHOdehase</fullName>
        <shortName evidence="1">DHOD</shortName>
        <shortName evidence="1">DHODase</shortName>
    </alternativeName>
    <alternativeName>
        <fullName evidence="1">Dihydroorotate oxidase</fullName>
    </alternativeName>
</protein>
<feature type="chain" id="PRO_1000100273" description="Dihydroorotate dehydrogenase (quinone)">
    <location>
        <begin position="1"/>
        <end position="376"/>
    </location>
</feature>
<feature type="active site" description="Nucleophile" evidence="1">
    <location>
        <position position="191"/>
    </location>
</feature>
<feature type="binding site" evidence="1">
    <location>
        <begin position="74"/>
        <end position="78"/>
    </location>
    <ligand>
        <name>FMN</name>
        <dbReference type="ChEBI" id="CHEBI:58210"/>
    </ligand>
</feature>
<feature type="binding site" evidence="1">
    <location>
        <position position="78"/>
    </location>
    <ligand>
        <name>substrate</name>
    </ligand>
</feature>
<feature type="binding site" evidence="1">
    <location>
        <position position="98"/>
    </location>
    <ligand>
        <name>FMN</name>
        <dbReference type="ChEBI" id="CHEBI:58210"/>
    </ligand>
</feature>
<feature type="binding site" evidence="1">
    <location>
        <begin position="123"/>
        <end position="127"/>
    </location>
    <ligand>
        <name>substrate</name>
    </ligand>
</feature>
<feature type="binding site" evidence="1">
    <location>
        <position position="155"/>
    </location>
    <ligand>
        <name>FMN</name>
        <dbReference type="ChEBI" id="CHEBI:58210"/>
    </ligand>
</feature>
<feature type="binding site" evidence="1">
    <location>
        <position position="188"/>
    </location>
    <ligand>
        <name>FMN</name>
        <dbReference type="ChEBI" id="CHEBI:58210"/>
    </ligand>
</feature>
<feature type="binding site" evidence="1">
    <location>
        <position position="188"/>
    </location>
    <ligand>
        <name>substrate</name>
    </ligand>
</feature>
<feature type="binding site" evidence="1">
    <location>
        <position position="193"/>
    </location>
    <ligand>
        <name>substrate</name>
    </ligand>
</feature>
<feature type="binding site" evidence="1">
    <location>
        <position position="226"/>
    </location>
    <ligand>
        <name>FMN</name>
        <dbReference type="ChEBI" id="CHEBI:58210"/>
    </ligand>
</feature>
<feature type="binding site" evidence="1">
    <location>
        <position position="254"/>
    </location>
    <ligand>
        <name>FMN</name>
        <dbReference type="ChEBI" id="CHEBI:58210"/>
    </ligand>
</feature>
<feature type="binding site" evidence="1">
    <location>
        <begin position="255"/>
        <end position="256"/>
    </location>
    <ligand>
        <name>substrate</name>
    </ligand>
</feature>
<feature type="binding site" evidence="1">
    <location>
        <position position="284"/>
    </location>
    <ligand>
        <name>FMN</name>
        <dbReference type="ChEBI" id="CHEBI:58210"/>
    </ligand>
</feature>
<feature type="binding site" evidence="1">
    <location>
        <position position="313"/>
    </location>
    <ligand>
        <name>FMN</name>
        <dbReference type="ChEBI" id="CHEBI:58210"/>
    </ligand>
</feature>
<feature type="binding site" evidence="1">
    <location>
        <begin position="334"/>
        <end position="335"/>
    </location>
    <ligand>
        <name>FMN</name>
        <dbReference type="ChEBI" id="CHEBI:58210"/>
    </ligand>
</feature>
<proteinExistence type="inferred from homology"/>
<evidence type="ECO:0000255" key="1">
    <source>
        <dbReference type="HAMAP-Rule" id="MF_00225"/>
    </source>
</evidence>
<name>PYRD_NOSP7</name>
<reference key="1">
    <citation type="journal article" date="2013" name="Plant Physiol.">
        <title>A Nostoc punctiforme Sugar Transporter Necessary to Establish a Cyanobacterium-Plant Symbiosis.</title>
        <authorList>
            <person name="Ekman M."/>
            <person name="Picossi S."/>
            <person name="Campbell E.L."/>
            <person name="Meeks J.C."/>
            <person name="Flores E."/>
        </authorList>
    </citation>
    <scope>NUCLEOTIDE SEQUENCE [LARGE SCALE GENOMIC DNA]</scope>
    <source>
        <strain>ATCC 29133 / PCC 73102</strain>
    </source>
</reference>
<dbReference type="EC" id="1.3.5.2" evidence="1"/>
<dbReference type="EMBL" id="CP001037">
    <property type="protein sequence ID" value="ACC79650.1"/>
    <property type="molecule type" value="Genomic_DNA"/>
</dbReference>
<dbReference type="RefSeq" id="WP_012407672.1">
    <property type="nucleotide sequence ID" value="NC_010628.1"/>
</dbReference>
<dbReference type="SMR" id="B2IU79"/>
<dbReference type="STRING" id="63737.Npun_F0913"/>
<dbReference type="EnsemblBacteria" id="ACC79650">
    <property type="protein sequence ID" value="ACC79650"/>
    <property type="gene ID" value="Npun_F0913"/>
</dbReference>
<dbReference type="KEGG" id="npu:Npun_F0913"/>
<dbReference type="eggNOG" id="COG0167">
    <property type="taxonomic scope" value="Bacteria"/>
</dbReference>
<dbReference type="HOGENOM" id="CLU_013640_2_0_3"/>
<dbReference type="OrthoDB" id="9802377at2"/>
<dbReference type="PhylomeDB" id="B2IU79"/>
<dbReference type="UniPathway" id="UPA00070">
    <property type="reaction ID" value="UER00946"/>
</dbReference>
<dbReference type="Proteomes" id="UP000001191">
    <property type="component" value="Chromosome"/>
</dbReference>
<dbReference type="GO" id="GO:0005737">
    <property type="term" value="C:cytoplasm"/>
    <property type="evidence" value="ECO:0007669"/>
    <property type="project" value="InterPro"/>
</dbReference>
<dbReference type="GO" id="GO:0005886">
    <property type="term" value="C:plasma membrane"/>
    <property type="evidence" value="ECO:0007669"/>
    <property type="project" value="UniProtKB-SubCell"/>
</dbReference>
<dbReference type="GO" id="GO:0106430">
    <property type="term" value="F:dihydroorotate dehydrogenase (quinone) activity"/>
    <property type="evidence" value="ECO:0007669"/>
    <property type="project" value="UniProtKB-EC"/>
</dbReference>
<dbReference type="GO" id="GO:0006207">
    <property type="term" value="P:'de novo' pyrimidine nucleobase biosynthetic process"/>
    <property type="evidence" value="ECO:0007669"/>
    <property type="project" value="InterPro"/>
</dbReference>
<dbReference type="GO" id="GO:0044205">
    <property type="term" value="P:'de novo' UMP biosynthetic process"/>
    <property type="evidence" value="ECO:0007669"/>
    <property type="project" value="UniProtKB-UniRule"/>
</dbReference>
<dbReference type="CDD" id="cd04738">
    <property type="entry name" value="DHOD_2_like"/>
    <property type="match status" value="1"/>
</dbReference>
<dbReference type="Gene3D" id="3.20.20.70">
    <property type="entry name" value="Aldolase class I"/>
    <property type="match status" value="1"/>
</dbReference>
<dbReference type="HAMAP" id="MF_00225">
    <property type="entry name" value="DHO_dh_type2"/>
    <property type="match status" value="1"/>
</dbReference>
<dbReference type="InterPro" id="IPR013785">
    <property type="entry name" value="Aldolase_TIM"/>
</dbReference>
<dbReference type="InterPro" id="IPR050074">
    <property type="entry name" value="DHO_dehydrogenase"/>
</dbReference>
<dbReference type="InterPro" id="IPR005719">
    <property type="entry name" value="Dihydroorotate_DH_2"/>
</dbReference>
<dbReference type="InterPro" id="IPR005720">
    <property type="entry name" value="Dihydroorotate_DH_cat"/>
</dbReference>
<dbReference type="InterPro" id="IPR001295">
    <property type="entry name" value="Dihydroorotate_DH_CS"/>
</dbReference>
<dbReference type="NCBIfam" id="NF003651">
    <property type="entry name" value="PRK05286.2-4"/>
    <property type="match status" value="1"/>
</dbReference>
<dbReference type="NCBIfam" id="NF003652">
    <property type="entry name" value="PRK05286.2-5"/>
    <property type="match status" value="1"/>
</dbReference>
<dbReference type="NCBIfam" id="TIGR01036">
    <property type="entry name" value="pyrD_sub2"/>
    <property type="match status" value="1"/>
</dbReference>
<dbReference type="PANTHER" id="PTHR48109:SF4">
    <property type="entry name" value="DIHYDROOROTATE DEHYDROGENASE (QUINONE), MITOCHONDRIAL"/>
    <property type="match status" value="1"/>
</dbReference>
<dbReference type="PANTHER" id="PTHR48109">
    <property type="entry name" value="DIHYDROOROTATE DEHYDROGENASE (QUINONE), MITOCHONDRIAL-RELATED"/>
    <property type="match status" value="1"/>
</dbReference>
<dbReference type="Pfam" id="PF01180">
    <property type="entry name" value="DHO_dh"/>
    <property type="match status" value="1"/>
</dbReference>
<dbReference type="SUPFAM" id="SSF51395">
    <property type="entry name" value="FMN-linked oxidoreductases"/>
    <property type="match status" value="1"/>
</dbReference>
<dbReference type="PROSITE" id="PS00911">
    <property type="entry name" value="DHODEHASE_1"/>
    <property type="match status" value="1"/>
</dbReference>
<dbReference type="PROSITE" id="PS00912">
    <property type="entry name" value="DHODEHASE_2"/>
    <property type="match status" value="1"/>
</dbReference>
<gene>
    <name evidence="1" type="primary">pyrD</name>
    <name type="ordered locus">Npun_F0913</name>
</gene>